<sequence length="125" mass="13789">MGTRAQARFVRVTPRKARRVVDLIRGLPAEEAQAVLRFAPQAASGPVGKVLASAIANAEHNDKLDRETLVVSRAWVDEGPTLKRIRPRGFGRAFRVNKRTSHITVEVAPRDTVGAASAKRKERTR</sequence>
<gene>
    <name evidence="1" type="primary">rplV</name>
    <name type="ordered locus">Tfu_2641</name>
</gene>
<accession>Q47LJ8</accession>
<feature type="chain" id="PRO_0000243222" description="Large ribosomal subunit protein uL22">
    <location>
        <begin position="1"/>
        <end position="125"/>
    </location>
</feature>
<name>RL22_THEFY</name>
<keyword id="KW-0687">Ribonucleoprotein</keyword>
<keyword id="KW-0689">Ribosomal protein</keyword>
<keyword id="KW-0694">RNA-binding</keyword>
<keyword id="KW-0699">rRNA-binding</keyword>
<proteinExistence type="inferred from homology"/>
<evidence type="ECO:0000255" key="1">
    <source>
        <dbReference type="HAMAP-Rule" id="MF_01331"/>
    </source>
</evidence>
<evidence type="ECO:0000305" key="2"/>
<dbReference type="EMBL" id="CP000088">
    <property type="protein sequence ID" value="AAZ56674.1"/>
    <property type="molecule type" value="Genomic_DNA"/>
</dbReference>
<dbReference type="RefSeq" id="WP_011293064.1">
    <property type="nucleotide sequence ID" value="NC_007333.1"/>
</dbReference>
<dbReference type="SMR" id="Q47LJ8"/>
<dbReference type="STRING" id="269800.Tfu_2641"/>
<dbReference type="KEGG" id="tfu:Tfu_2641"/>
<dbReference type="eggNOG" id="COG0091">
    <property type="taxonomic scope" value="Bacteria"/>
</dbReference>
<dbReference type="HOGENOM" id="CLU_083987_3_3_11"/>
<dbReference type="OrthoDB" id="9805969at2"/>
<dbReference type="GO" id="GO:0022625">
    <property type="term" value="C:cytosolic large ribosomal subunit"/>
    <property type="evidence" value="ECO:0007669"/>
    <property type="project" value="TreeGrafter"/>
</dbReference>
<dbReference type="GO" id="GO:0019843">
    <property type="term" value="F:rRNA binding"/>
    <property type="evidence" value="ECO:0007669"/>
    <property type="project" value="UniProtKB-UniRule"/>
</dbReference>
<dbReference type="GO" id="GO:0003735">
    <property type="term" value="F:structural constituent of ribosome"/>
    <property type="evidence" value="ECO:0007669"/>
    <property type="project" value="InterPro"/>
</dbReference>
<dbReference type="GO" id="GO:0006412">
    <property type="term" value="P:translation"/>
    <property type="evidence" value="ECO:0007669"/>
    <property type="project" value="UniProtKB-UniRule"/>
</dbReference>
<dbReference type="CDD" id="cd00336">
    <property type="entry name" value="Ribosomal_L22"/>
    <property type="match status" value="1"/>
</dbReference>
<dbReference type="FunFam" id="3.90.470.10:FF:000002">
    <property type="entry name" value="50S ribosomal protein L22"/>
    <property type="match status" value="1"/>
</dbReference>
<dbReference type="Gene3D" id="3.90.470.10">
    <property type="entry name" value="Ribosomal protein L22/L17"/>
    <property type="match status" value="1"/>
</dbReference>
<dbReference type="HAMAP" id="MF_01331_B">
    <property type="entry name" value="Ribosomal_uL22_B"/>
    <property type="match status" value="1"/>
</dbReference>
<dbReference type="InterPro" id="IPR001063">
    <property type="entry name" value="Ribosomal_uL22"/>
</dbReference>
<dbReference type="InterPro" id="IPR005727">
    <property type="entry name" value="Ribosomal_uL22_bac/chlpt-type"/>
</dbReference>
<dbReference type="InterPro" id="IPR047867">
    <property type="entry name" value="Ribosomal_uL22_bac/org-type"/>
</dbReference>
<dbReference type="InterPro" id="IPR018260">
    <property type="entry name" value="Ribosomal_uL22_CS"/>
</dbReference>
<dbReference type="InterPro" id="IPR036394">
    <property type="entry name" value="Ribosomal_uL22_sf"/>
</dbReference>
<dbReference type="NCBIfam" id="TIGR01044">
    <property type="entry name" value="rplV_bact"/>
    <property type="match status" value="1"/>
</dbReference>
<dbReference type="PANTHER" id="PTHR13501">
    <property type="entry name" value="CHLOROPLAST 50S RIBOSOMAL PROTEIN L22-RELATED"/>
    <property type="match status" value="1"/>
</dbReference>
<dbReference type="PANTHER" id="PTHR13501:SF8">
    <property type="entry name" value="LARGE RIBOSOMAL SUBUNIT PROTEIN UL22M"/>
    <property type="match status" value="1"/>
</dbReference>
<dbReference type="Pfam" id="PF00237">
    <property type="entry name" value="Ribosomal_L22"/>
    <property type="match status" value="1"/>
</dbReference>
<dbReference type="SUPFAM" id="SSF54843">
    <property type="entry name" value="Ribosomal protein L22"/>
    <property type="match status" value="1"/>
</dbReference>
<dbReference type="PROSITE" id="PS00464">
    <property type="entry name" value="RIBOSOMAL_L22"/>
    <property type="match status" value="1"/>
</dbReference>
<reference key="1">
    <citation type="journal article" date="2007" name="J. Bacteriol.">
        <title>Genome sequence and analysis of the soil cellulolytic actinomycete Thermobifida fusca YX.</title>
        <authorList>
            <person name="Lykidis A."/>
            <person name="Mavromatis K."/>
            <person name="Ivanova N."/>
            <person name="Anderson I."/>
            <person name="Land M."/>
            <person name="DiBartolo G."/>
            <person name="Martinez M."/>
            <person name="Lapidus A."/>
            <person name="Lucas S."/>
            <person name="Copeland A."/>
            <person name="Richardson P."/>
            <person name="Wilson D.B."/>
            <person name="Kyrpides N."/>
        </authorList>
    </citation>
    <scope>NUCLEOTIDE SEQUENCE [LARGE SCALE GENOMIC DNA]</scope>
    <source>
        <strain>YX</strain>
    </source>
</reference>
<comment type="function">
    <text evidence="1">This protein binds specifically to 23S rRNA; its binding is stimulated by other ribosomal proteins, e.g. L4, L17, and L20. It is important during the early stages of 50S assembly. It makes multiple contacts with different domains of the 23S rRNA in the assembled 50S subunit and ribosome (By similarity).</text>
</comment>
<comment type="function">
    <text evidence="1">The globular domain of the protein is located near the polypeptide exit tunnel on the outside of the subunit, while an extended beta-hairpin is found that lines the wall of the exit tunnel in the center of the 70S ribosome.</text>
</comment>
<comment type="subunit">
    <text evidence="1">Part of the 50S ribosomal subunit.</text>
</comment>
<comment type="similarity">
    <text evidence="1">Belongs to the universal ribosomal protein uL22 family.</text>
</comment>
<protein>
    <recommendedName>
        <fullName evidence="1">Large ribosomal subunit protein uL22</fullName>
    </recommendedName>
    <alternativeName>
        <fullName evidence="2">50S ribosomal protein L22</fullName>
    </alternativeName>
</protein>
<organism>
    <name type="scientific">Thermobifida fusca (strain YX)</name>
    <dbReference type="NCBI Taxonomy" id="269800"/>
    <lineage>
        <taxon>Bacteria</taxon>
        <taxon>Bacillati</taxon>
        <taxon>Actinomycetota</taxon>
        <taxon>Actinomycetes</taxon>
        <taxon>Streptosporangiales</taxon>
        <taxon>Nocardiopsidaceae</taxon>
        <taxon>Thermobifida</taxon>
    </lineage>
</organism>